<sequence>MVTMKDLLECGVHFGHQTRRWNPKMKRFIFGVRKNIHIIDLQKTLRYFRYTYNIIKQAASEGKVIMFVGTKRQASETLKQYAESVNAPYVNYRWLGGMLTNFSTIKKSIRRLEIIEEMESSGQIDLLTKKEKLMLQRKKEKLDKYLGGVRHMKKAPDMIFVIDAAKEKIAVAEARRLGIPVVAPLDTNCDPDMVDYPIPGNDDAIRSIQLFCKEISEAILEGRSENKDEQNEQGEQIAPVTNEEKQEILDEVTAEVATQMQEEA</sequence>
<feature type="chain" id="PRO_0000134177" description="Small ribosomal subunit protein uS2">
    <location>
        <begin position="1"/>
        <end position="264"/>
    </location>
</feature>
<feature type="region of interest" description="Disordered" evidence="2">
    <location>
        <begin position="222"/>
        <end position="246"/>
    </location>
</feature>
<name>RS2_HELHP</name>
<organism>
    <name type="scientific">Helicobacter hepaticus (strain ATCC 51449 / 3B1)</name>
    <dbReference type="NCBI Taxonomy" id="235279"/>
    <lineage>
        <taxon>Bacteria</taxon>
        <taxon>Pseudomonadati</taxon>
        <taxon>Campylobacterota</taxon>
        <taxon>Epsilonproteobacteria</taxon>
        <taxon>Campylobacterales</taxon>
        <taxon>Helicobacteraceae</taxon>
        <taxon>Helicobacter</taxon>
    </lineage>
</organism>
<accession>Q7VH95</accession>
<protein>
    <recommendedName>
        <fullName evidence="1">Small ribosomal subunit protein uS2</fullName>
    </recommendedName>
    <alternativeName>
        <fullName evidence="3">30S ribosomal protein S2</fullName>
    </alternativeName>
</protein>
<gene>
    <name evidence="1" type="primary">rpsB</name>
    <name type="ordered locus">HH_1072</name>
</gene>
<keyword id="KW-1185">Reference proteome</keyword>
<keyword id="KW-0687">Ribonucleoprotein</keyword>
<keyword id="KW-0689">Ribosomal protein</keyword>
<comment type="similarity">
    <text evidence="1">Belongs to the universal ribosomal protein uS2 family.</text>
</comment>
<reference key="1">
    <citation type="journal article" date="2003" name="Proc. Natl. Acad. Sci. U.S.A.">
        <title>The complete genome sequence of the carcinogenic bacterium Helicobacter hepaticus.</title>
        <authorList>
            <person name="Suerbaum S."/>
            <person name="Josenhans C."/>
            <person name="Sterzenbach T."/>
            <person name="Drescher B."/>
            <person name="Brandt P."/>
            <person name="Bell M."/>
            <person name="Droege M."/>
            <person name="Fartmann B."/>
            <person name="Fischer H.-P."/>
            <person name="Ge Z."/>
            <person name="Hoerster A."/>
            <person name="Holland R."/>
            <person name="Klein K."/>
            <person name="Koenig J."/>
            <person name="Macko L."/>
            <person name="Mendz G.L."/>
            <person name="Nyakatura G."/>
            <person name="Schauer D.B."/>
            <person name="Shen Z."/>
            <person name="Weber J."/>
            <person name="Frosch M."/>
            <person name="Fox J.G."/>
        </authorList>
    </citation>
    <scope>NUCLEOTIDE SEQUENCE [LARGE SCALE GENOMIC DNA]</scope>
    <source>
        <strain>ATCC 51449 / 3B1</strain>
    </source>
</reference>
<dbReference type="EMBL" id="AE017125">
    <property type="protein sequence ID" value="AAP77669.1"/>
    <property type="molecule type" value="Genomic_DNA"/>
</dbReference>
<dbReference type="RefSeq" id="WP_011115912.1">
    <property type="nucleotide sequence ID" value="NC_004917.1"/>
</dbReference>
<dbReference type="SMR" id="Q7VH95"/>
<dbReference type="STRING" id="235279.HH_1072"/>
<dbReference type="KEGG" id="hhe:HH_1072"/>
<dbReference type="eggNOG" id="COG0052">
    <property type="taxonomic scope" value="Bacteria"/>
</dbReference>
<dbReference type="HOGENOM" id="CLU_040318_1_2_7"/>
<dbReference type="OrthoDB" id="9808036at2"/>
<dbReference type="Proteomes" id="UP000002495">
    <property type="component" value="Chromosome"/>
</dbReference>
<dbReference type="GO" id="GO:0022627">
    <property type="term" value="C:cytosolic small ribosomal subunit"/>
    <property type="evidence" value="ECO:0007669"/>
    <property type="project" value="TreeGrafter"/>
</dbReference>
<dbReference type="GO" id="GO:0003735">
    <property type="term" value="F:structural constituent of ribosome"/>
    <property type="evidence" value="ECO:0007669"/>
    <property type="project" value="InterPro"/>
</dbReference>
<dbReference type="GO" id="GO:0006412">
    <property type="term" value="P:translation"/>
    <property type="evidence" value="ECO:0007669"/>
    <property type="project" value="UniProtKB-UniRule"/>
</dbReference>
<dbReference type="CDD" id="cd01425">
    <property type="entry name" value="RPS2"/>
    <property type="match status" value="1"/>
</dbReference>
<dbReference type="FunFam" id="1.10.287.610:FF:000001">
    <property type="entry name" value="30S ribosomal protein S2"/>
    <property type="match status" value="1"/>
</dbReference>
<dbReference type="Gene3D" id="3.40.50.10490">
    <property type="entry name" value="Glucose-6-phosphate isomerase like protein, domain 1"/>
    <property type="match status" value="1"/>
</dbReference>
<dbReference type="Gene3D" id="1.10.287.610">
    <property type="entry name" value="Helix hairpin bin"/>
    <property type="match status" value="1"/>
</dbReference>
<dbReference type="HAMAP" id="MF_00291_B">
    <property type="entry name" value="Ribosomal_uS2_B"/>
    <property type="match status" value="1"/>
</dbReference>
<dbReference type="InterPro" id="IPR001865">
    <property type="entry name" value="Ribosomal_uS2"/>
</dbReference>
<dbReference type="InterPro" id="IPR005706">
    <property type="entry name" value="Ribosomal_uS2_bac/mit/plastid"/>
</dbReference>
<dbReference type="InterPro" id="IPR018130">
    <property type="entry name" value="Ribosomal_uS2_CS"/>
</dbReference>
<dbReference type="InterPro" id="IPR023591">
    <property type="entry name" value="Ribosomal_uS2_flav_dom_sf"/>
</dbReference>
<dbReference type="NCBIfam" id="TIGR01011">
    <property type="entry name" value="rpsB_bact"/>
    <property type="match status" value="1"/>
</dbReference>
<dbReference type="PANTHER" id="PTHR12534">
    <property type="entry name" value="30S RIBOSOMAL PROTEIN S2 PROKARYOTIC AND ORGANELLAR"/>
    <property type="match status" value="1"/>
</dbReference>
<dbReference type="PANTHER" id="PTHR12534:SF0">
    <property type="entry name" value="SMALL RIBOSOMAL SUBUNIT PROTEIN US2M"/>
    <property type="match status" value="1"/>
</dbReference>
<dbReference type="Pfam" id="PF00318">
    <property type="entry name" value="Ribosomal_S2"/>
    <property type="match status" value="1"/>
</dbReference>
<dbReference type="PRINTS" id="PR00395">
    <property type="entry name" value="RIBOSOMALS2"/>
</dbReference>
<dbReference type="SUPFAM" id="SSF52313">
    <property type="entry name" value="Ribosomal protein S2"/>
    <property type="match status" value="1"/>
</dbReference>
<dbReference type="PROSITE" id="PS00962">
    <property type="entry name" value="RIBOSOMAL_S2_1"/>
    <property type="match status" value="1"/>
</dbReference>
<dbReference type="PROSITE" id="PS00963">
    <property type="entry name" value="RIBOSOMAL_S2_2"/>
    <property type="match status" value="1"/>
</dbReference>
<evidence type="ECO:0000255" key="1">
    <source>
        <dbReference type="HAMAP-Rule" id="MF_00291"/>
    </source>
</evidence>
<evidence type="ECO:0000256" key="2">
    <source>
        <dbReference type="SAM" id="MobiDB-lite"/>
    </source>
</evidence>
<evidence type="ECO:0000305" key="3"/>
<proteinExistence type="inferred from homology"/>